<organism>
    <name type="scientific">Yersinia enterocolitica serotype O:8 / biotype 1B (strain NCTC 13174 / 8081)</name>
    <dbReference type="NCBI Taxonomy" id="393305"/>
    <lineage>
        <taxon>Bacteria</taxon>
        <taxon>Pseudomonadati</taxon>
        <taxon>Pseudomonadota</taxon>
        <taxon>Gammaproteobacteria</taxon>
        <taxon>Enterobacterales</taxon>
        <taxon>Yersiniaceae</taxon>
        <taxon>Yersinia</taxon>
    </lineage>
</organism>
<sequence length="203" mass="22399">MKKLLVACCLLSGLISAHALADASSDLQARLGKVNSFHANFSQKVTSSEGTAVQEGEGELWVKRPNLFNWHMTSPDESVLISDGETLWFYNPFVEQATATWLKNATGNTPFMLITRNNPDDWKQYNVKQKGDDFELTPKSASGNLKQFAITVTPTGTIKSFTAVEQDGQRSAYTLKGQQNSSADASKFKFTLPKGVTLDDQRQ</sequence>
<protein>
    <recommendedName>
        <fullName evidence="1">Outer-membrane lipoprotein carrier protein</fullName>
    </recommendedName>
</protein>
<proteinExistence type="inferred from homology"/>
<name>LOLA_YERE8</name>
<reference key="1">
    <citation type="journal article" date="2006" name="PLoS Genet.">
        <title>The complete genome sequence and comparative genome analysis of the high pathogenicity Yersinia enterocolitica strain 8081.</title>
        <authorList>
            <person name="Thomson N.R."/>
            <person name="Howard S."/>
            <person name="Wren B.W."/>
            <person name="Holden M.T.G."/>
            <person name="Crossman L."/>
            <person name="Challis G.L."/>
            <person name="Churcher C."/>
            <person name="Mungall K."/>
            <person name="Brooks K."/>
            <person name="Chillingworth T."/>
            <person name="Feltwell T."/>
            <person name="Abdellah Z."/>
            <person name="Hauser H."/>
            <person name="Jagels K."/>
            <person name="Maddison M."/>
            <person name="Moule S."/>
            <person name="Sanders M."/>
            <person name="Whitehead S."/>
            <person name="Quail M.A."/>
            <person name="Dougan G."/>
            <person name="Parkhill J."/>
            <person name="Prentice M.B."/>
        </authorList>
    </citation>
    <scope>NUCLEOTIDE SEQUENCE [LARGE SCALE GENOMIC DNA]</scope>
    <source>
        <strain>NCTC 13174 / 8081</strain>
    </source>
</reference>
<feature type="signal peptide" evidence="1">
    <location>
        <begin position="1"/>
        <end position="21"/>
    </location>
</feature>
<feature type="chain" id="PRO_5000201125" description="Outer-membrane lipoprotein carrier protein">
    <location>
        <begin position="22"/>
        <end position="203"/>
    </location>
</feature>
<gene>
    <name evidence="1" type="primary">lolA</name>
    <name type="ordered locus">YE1526</name>
</gene>
<evidence type="ECO:0000255" key="1">
    <source>
        <dbReference type="HAMAP-Rule" id="MF_00240"/>
    </source>
</evidence>
<comment type="function">
    <text evidence="1">Participates in the translocation of lipoproteins from the inner membrane to the outer membrane. Only forms a complex with a lipoprotein if the residue after the N-terminal Cys is not an aspartate (The Asp acts as a targeting signal to indicate that the lipoprotein should stay in the inner membrane).</text>
</comment>
<comment type="subunit">
    <text evidence="1">Monomer.</text>
</comment>
<comment type="subcellular location">
    <subcellularLocation>
        <location evidence="1">Periplasm</location>
    </subcellularLocation>
</comment>
<comment type="similarity">
    <text evidence="1">Belongs to the LolA family.</text>
</comment>
<accession>A1JMF6</accession>
<dbReference type="EMBL" id="AM286415">
    <property type="protein sequence ID" value="CAL11605.1"/>
    <property type="molecule type" value="Genomic_DNA"/>
</dbReference>
<dbReference type="RefSeq" id="WP_005171053.1">
    <property type="nucleotide sequence ID" value="NC_008800.1"/>
</dbReference>
<dbReference type="RefSeq" id="YP_001005821.1">
    <property type="nucleotide sequence ID" value="NC_008800.1"/>
</dbReference>
<dbReference type="SMR" id="A1JMF6"/>
<dbReference type="KEGG" id="yen:YE1526"/>
<dbReference type="PATRIC" id="fig|393305.7.peg.1653"/>
<dbReference type="eggNOG" id="COG2834">
    <property type="taxonomic scope" value="Bacteria"/>
</dbReference>
<dbReference type="HOGENOM" id="CLU_087560_1_1_6"/>
<dbReference type="OrthoDB" id="9787361at2"/>
<dbReference type="Proteomes" id="UP000000642">
    <property type="component" value="Chromosome"/>
</dbReference>
<dbReference type="GO" id="GO:0030288">
    <property type="term" value="C:outer membrane-bounded periplasmic space"/>
    <property type="evidence" value="ECO:0007669"/>
    <property type="project" value="TreeGrafter"/>
</dbReference>
<dbReference type="GO" id="GO:0044874">
    <property type="term" value="P:lipoprotein localization to outer membrane"/>
    <property type="evidence" value="ECO:0007669"/>
    <property type="project" value="UniProtKB-UniRule"/>
</dbReference>
<dbReference type="GO" id="GO:0042953">
    <property type="term" value="P:lipoprotein transport"/>
    <property type="evidence" value="ECO:0007669"/>
    <property type="project" value="InterPro"/>
</dbReference>
<dbReference type="CDD" id="cd16325">
    <property type="entry name" value="LolA"/>
    <property type="match status" value="1"/>
</dbReference>
<dbReference type="FunFam" id="2.50.20.10:FF:000001">
    <property type="entry name" value="Outer-membrane lipoprotein carrier protein"/>
    <property type="match status" value="1"/>
</dbReference>
<dbReference type="Gene3D" id="2.50.20.10">
    <property type="entry name" value="Lipoprotein localisation LolA/LolB/LppX"/>
    <property type="match status" value="1"/>
</dbReference>
<dbReference type="HAMAP" id="MF_00240">
    <property type="entry name" value="LolA"/>
    <property type="match status" value="1"/>
</dbReference>
<dbReference type="InterPro" id="IPR029046">
    <property type="entry name" value="LolA/LolB/LppX"/>
</dbReference>
<dbReference type="InterPro" id="IPR004564">
    <property type="entry name" value="OM_lipoprot_carrier_LolA-like"/>
</dbReference>
<dbReference type="InterPro" id="IPR018323">
    <property type="entry name" value="OM_lipoprot_carrier_LolA_Pbac"/>
</dbReference>
<dbReference type="NCBIfam" id="TIGR00547">
    <property type="entry name" value="lolA"/>
    <property type="match status" value="1"/>
</dbReference>
<dbReference type="PANTHER" id="PTHR35869">
    <property type="entry name" value="OUTER-MEMBRANE LIPOPROTEIN CARRIER PROTEIN"/>
    <property type="match status" value="1"/>
</dbReference>
<dbReference type="PANTHER" id="PTHR35869:SF1">
    <property type="entry name" value="OUTER-MEMBRANE LIPOPROTEIN CARRIER PROTEIN"/>
    <property type="match status" value="1"/>
</dbReference>
<dbReference type="Pfam" id="PF03548">
    <property type="entry name" value="LolA"/>
    <property type="match status" value="1"/>
</dbReference>
<dbReference type="SUPFAM" id="SSF89392">
    <property type="entry name" value="Prokaryotic lipoproteins and lipoprotein localization factors"/>
    <property type="match status" value="1"/>
</dbReference>
<keyword id="KW-0143">Chaperone</keyword>
<keyword id="KW-0574">Periplasm</keyword>
<keyword id="KW-0653">Protein transport</keyword>
<keyword id="KW-0732">Signal</keyword>
<keyword id="KW-0813">Transport</keyword>